<proteinExistence type="evidence at protein level"/>
<name>VKT33_ACTEQ</name>
<accession>P0DMW8</accession>
<feature type="chain" id="PRO_0000433572" description="Kunitz-type proteinase inhibitor AEPI-III">
    <location>
        <begin position="1"/>
        <end position="35" status="greater than"/>
    </location>
</feature>
<feature type="domain" description="BPTI/Kunitz inhibitor" evidence="2">
    <location>
        <begin position="4"/>
        <end position="35" status="greater than"/>
    </location>
</feature>
<feature type="disulfide bond" evidence="2">
    <location>
        <begin position="4"/>
        <end status="unknown"/>
    </location>
</feature>
<feature type="disulfide bond" evidence="2">
    <location>
        <begin position="13"/>
        <end status="unknown"/>
    </location>
</feature>
<feature type="disulfide bond" evidence="2">
    <location>
        <begin position="29"/>
        <end status="unknown"/>
    </location>
</feature>
<feature type="non-terminal residue">
    <location>
        <position position="35"/>
    </location>
</feature>
<evidence type="ECO:0000250" key="1">
    <source>
        <dbReference type="UniProtKB" id="B1B5I8"/>
    </source>
</evidence>
<evidence type="ECO:0000255" key="2">
    <source>
        <dbReference type="PROSITE-ProRule" id="PRU00031"/>
    </source>
</evidence>
<evidence type="ECO:0000303" key="3">
    <source ref="1"/>
</evidence>
<evidence type="ECO:0000305" key="4"/>
<protein>
    <recommendedName>
        <fullName evidence="3">Kunitz-type proteinase inhibitor AEPI-III</fullName>
    </recommendedName>
</protein>
<organism>
    <name type="scientific">Actinia equina</name>
    <name type="common">Beadlet anemone</name>
    <dbReference type="NCBI Taxonomy" id="6106"/>
    <lineage>
        <taxon>Eukaryota</taxon>
        <taxon>Metazoa</taxon>
        <taxon>Cnidaria</taxon>
        <taxon>Anthozoa</taxon>
        <taxon>Hexacorallia</taxon>
        <taxon>Actiniaria</taxon>
        <taxon>Actiniidae</taxon>
        <taxon>Actinia</taxon>
    </lineage>
</organism>
<dbReference type="SMR" id="P0DMW8"/>
<dbReference type="GO" id="GO:0005576">
    <property type="term" value="C:extracellular region"/>
    <property type="evidence" value="ECO:0007669"/>
    <property type="project" value="UniProtKB-SubCell"/>
</dbReference>
<dbReference type="GO" id="GO:0042151">
    <property type="term" value="C:nematocyst"/>
    <property type="evidence" value="ECO:0007669"/>
    <property type="project" value="UniProtKB-SubCell"/>
</dbReference>
<dbReference type="GO" id="GO:0015459">
    <property type="term" value="F:potassium channel regulator activity"/>
    <property type="evidence" value="ECO:0007669"/>
    <property type="project" value="UniProtKB-KW"/>
</dbReference>
<dbReference type="GO" id="GO:0004867">
    <property type="term" value="F:serine-type endopeptidase inhibitor activity"/>
    <property type="evidence" value="ECO:0007669"/>
    <property type="project" value="UniProtKB-KW"/>
</dbReference>
<dbReference type="GO" id="GO:0090729">
    <property type="term" value="F:toxin activity"/>
    <property type="evidence" value="ECO:0007669"/>
    <property type="project" value="UniProtKB-KW"/>
</dbReference>
<dbReference type="Gene3D" id="4.10.410.10">
    <property type="entry name" value="Pancreatic trypsin inhibitor Kunitz domain"/>
    <property type="match status" value="1"/>
</dbReference>
<dbReference type="InterPro" id="IPR002223">
    <property type="entry name" value="Kunitz_BPTI"/>
</dbReference>
<dbReference type="InterPro" id="IPR036880">
    <property type="entry name" value="Kunitz_BPTI_sf"/>
</dbReference>
<dbReference type="Pfam" id="PF00014">
    <property type="entry name" value="Kunitz_BPTI"/>
    <property type="match status" value="1"/>
</dbReference>
<dbReference type="SMART" id="SM00131">
    <property type="entry name" value="KU"/>
    <property type="match status" value="1"/>
</dbReference>
<dbReference type="SUPFAM" id="SSF57362">
    <property type="entry name" value="BPTI-like"/>
    <property type="match status" value="1"/>
</dbReference>
<dbReference type="PROSITE" id="PS50279">
    <property type="entry name" value="BPTI_KUNITZ_2"/>
    <property type="match status" value="1"/>
</dbReference>
<keyword id="KW-0903">Direct protein sequencing</keyword>
<keyword id="KW-1015">Disulfide bond</keyword>
<keyword id="KW-0872">Ion channel impairing toxin</keyword>
<keyword id="KW-0166">Nematocyst</keyword>
<keyword id="KW-0632">Potassium channel impairing toxin</keyword>
<keyword id="KW-0646">Protease inhibitor</keyword>
<keyword id="KW-0964">Secreted</keyword>
<keyword id="KW-0722">Serine protease inhibitor</keyword>
<keyword id="KW-0800">Toxin</keyword>
<reference key="1">
    <citation type="journal article" date="1997" name="Fish. Sci.">
        <title>Amino acid sequences of Kunitz-type protease inhibitors from the sea anemone Actinia equina.</title>
        <authorList>
            <person name="Ishida M."/>
            <person name="Minagawa S."/>
            <person name="Miyauchi K."/>
            <person name="Shimakura K."/>
            <person name="Nagashima Y."/>
            <person name="Shiomi K."/>
        </authorList>
    </citation>
    <scope>PROTEIN SEQUENCE</scope>
</reference>
<sequence>NSFCNLPAVVGRCKGYFPRYFYNTEAGKCQRFIYG</sequence>
<comment type="function">
    <text evidence="1">Dual-function toxin that inhibits both the serine protease trypsin and voltage-gated potassium channels (Kv).</text>
</comment>
<comment type="subcellular location">
    <subcellularLocation>
        <location evidence="4">Secreted</location>
    </subcellularLocation>
    <subcellularLocation>
        <location evidence="4">Nematocyst</location>
    </subcellularLocation>
</comment>
<comment type="similarity">
    <text evidence="4">Belongs to the venom Kunitz-type family. Sea anemone type 2 potassium channel toxin subfamily.</text>
</comment>